<proteinExistence type="inferred from homology"/>
<gene>
    <name evidence="1" type="primary">rsmG</name>
    <name type="ordered locus">Athe_2756</name>
</gene>
<sequence>MELLDKVLEYYKVKNPLVVKHLLIKYMNLVLEKNKLFNLTAIENEEEFVIKHIADSLSLLKFIEQENSNQNPVAIDIGSGFGAPGLFVKIAMPSVNVFLNDSNKKKCKFMNEAKESLGISGVNVVCERAEVLGRKEEFREKFDFVFARAVDRLNVLCEYAIPLLKVGGAFLAQKGFECEDEIDLAKNAIEILGGEIYSIEKFVLPYSDEKRSIIIIKKLRQTPSNFPRNTKQIVKKPL</sequence>
<organism>
    <name type="scientific">Caldicellulosiruptor bescii (strain ATCC BAA-1888 / DSM 6725 / KCTC 15123 / Z-1320)</name>
    <name type="common">Anaerocellum thermophilum</name>
    <dbReference type="NCBI Taxonomy" id="521460"/>
    <lineage>
        <taxon>Bacteria</taxon>
        <taxon>Bacillati</taxon>
        <taxon>Bacillota</taxon>
        <taxon>Bacillota incertae sedis</taxon>
        <taxon>Caldicellulosiruptorales</taxon>
        <taxon>Caldicellulosiruptoraceae</taxon>
        <taxon>Caldicellulosiruptor</taxon>
    </lineage>
</organism>
<comment type="function">
    <text evidence="1">Specifically methylates the N7 position of a guanine in 16S rRNA.</text>
</comment>
<comment type="subcellular location">
    <subcellularLocation>
        <location evidence="1">Cytoplasm</location>
    </subcellularLocation>
</comment>
<comment type="similarity">
    <text evidence="1">Belongs to the methyltransferase superfamily. RNA methyltransferase RsmG family.</text>
</comment>
<evidence type="ECO:0000255" key="1">
    <source>
        <dbReference type="HAMAP-Rule" id="MF_00074"/>
    </source>
</evidence>
<feature type="chain" id="PRO_1000118171" description="Ribosomal RNA small subunit methyltransferase G">
    <location>
        <begin position="1"/>
        <end position="238"/>
    </location>
</feature>
<feature type="binding site" evidence="1">
    <location>
        <position position="78"/>
    </location>
    <ligand>
        <name>S-adenosyl-L-methionine</name>
        <dbReference type="ChEBI" id="CHEBI:59789"/>
    </ligand>
</feature>
<feature type="binding site" evidence="1">
    <location>
        <begin position="129"/>
        <end position="130"/>
    </location>
    <ligand>
        <name>S-adenosyl-L-methionine</name>
        <dbReference type="ChEBI" id="CHEBI:59789"/>
    </ligand>
</feature>
<feature type="binding site" evidence="1">
    <location>
        <position position="148"/>
    </location>
    <ligand>
        <name>S-adenosyl-L-methionine</name>
        <dbReference type="ChEBI" id="CHEBI:59789"/>
    </ligand>
</feature>
<accession>B9MQF1</accession>
<reference key="1">
    <citation type="submission" date="2009-01" db="EMBL/GenBank/DDBJ databases">
        <title>Complete sequence of chromosome of Caldicellulosiruptor becscii DSM 6725.</title>
        <authorList>
            <person name="Lucas S."/>
            <person name="Copeland A."/>
            <person name="Lapidus A."/>
            <person name="Glavina del Rio T."/>
            <person name="Tice H."/>
            <person name="Bruce D."/>
            <person name="Goodwin L."/>
            <person name="Pitluck S."/>
            <person name="Sims D."/>
            <person name="Meincke L."/>
            <person name="Brettin T."/>
            <person name="Detter J.C."/>
            <person name="Han C."/>
            <person name="Larimer F."/>
            <person name="Land M."/>
            <person name="Hauser L."/>
            <person name="Kyrpides N."/>
            <person name="Ovchinnikova G."/>
            <person name="Kataeva I."/>
            <person name="Adams M.W.W."/>
        </authorList>
    </citation>
    <scope>NUCLEOTIDE SEQUENCE [LARGE SCALE GENOMIC DNA]</scope>
    <source>
        <strain>ATCC BAA-1888 / DSM 6725 / KCTC 15123 / Z-1320</strain>
    </source>
</reference>
<protein>
    <recommendedName>
        <fullName evidence="1">Ribosomal RNA small subunit methyltransferase G</fullName>
        <ecNumber evidence="1">2.1.1.-</ecNumber>
    </recommendedName>
    <alternativeName>
        <fullName evidence="1">16S rRNA 7-methylguanosine methyltransferase</fullName>
        <shortName evidence="1">16S rRNA m7G methyltransferase</shortName>
    </alternativeName>
</protein>
<keyword id="KW-0963">Cytoplasm</keyword>
<keyword id="KW-0489">Methyltransferase</keyword>
<keyword id="KW-0698">rRNA processing</keyword>
<keyword id="KW-0949">S-adenosyl-L-methionine</keyword>
<keyword id="KW-0808">Transferase</keyword>
<name>RSMG_CALBD</name>
<dbReference type="EC" id="2.1.1.-" evidence="1"/>
<dbReference type="EMBL" id="CP001393">
    <property type="protein sequence ID" value="ACM61808.1"/>
    <property type="molecule type" value="Genomic_DNA"/>
</dbReference>
<dbReference type="RefSeq" id="WP_015909047.1">
    <property type="nucleotide sequence ID" value="NC_012034.1"/>
</dbReference>
<dbReference type="SMR" id="B9MQF1"/>
<dbReference type="STRING" id="521460.Athe_2756"/>
<dbReference type="GeneID" id="31774110"/>
<dbReference type="KEGG" id="ate:Athe_2756"/>
<dbReference type="eggNOG" id="COG0357">
    <property type="taxonomic scope" value="Bacteria"/>
</dbReference>
<dbReference type="HOGENOM" id="CLU_065341_0_0_9"/>
<dbReference type="Proteomes" id="UP000007723">
    <property type="component" value="Chromosome"/>
</dbReference>
<dbReference type="GO" id="GO:0005829">
    <property type="term" value="C:cytosol"/>
    <property type="evidence" value="ECO:0007669"/>
    <property type="project" value="TreeGrafter"/>
</dbReference>
<dbReference type="GO" id="GO:0070043">
    <property type="term" value="F:rRNA (guanine-N7-)-methyltransferase activity"/>
    <property type="evidence" value="ECO:0007669"/>
    <property type="project" value="UniProtKB-UniRule"/>
</dbReference>
<dbReference type="FunFam" id="3.40.50.150:FF:000041">
    <property type="entry name" value="Ribosomal RNA small subunit methyltransferase G"/>
    <property type="match status" value="1"/>
</dbReference>
<dbReference type="Gene3D" id="3.40.50.150">
    <property type="entry name" value="Vaccinia Virus protein VP39"/>
    <property type="match status" value="1"/>
</dbReference>
<dbReference type="HAMAP" id="MF_00074">
    <property type="entry name" value="16SrRNA_methyltr_G"/>
    <property type="match status" value="1"/>
</dbReference>
<dbReference type="InterPro" id="IPR003682">
    <property type="entry name" value="rRNA_ssu_MeTfrase_G"/>
</dbReference>
<dbReference type="InterPro" id="IPR029063">
    <property type="entry name" value="SAM-dependent_MTases_sf"/>
</dbReference>
<dbReference type="NCBIfam" id="TIGR00138">
    <property type="entry name" value="rsmG_gidB"/>
    <property type="match status" value="1"/>
</dbReference>
<dbReference type="PANTHER" id="PTHR31760">
    <property type="entry name" value="S-ADENOSYL-L-METHIONINE-DEPENDENT METHYLTRANSFERASES SUPERFAMILY PROTEIN"/>
    <property type="match status" value="1"/>
</dbReference>
<dbReference type="PANTHER" id="PTHR31760:SF0">
    <property type="entry name" value="S-ADENOSYL-L-METHIONINE-DEPENDENT METHYLTRANSFERASES SUPERFAMILY PROTEIN"/>
    <property type="match status" value="1"/>
</dbReference>
<dbReference type="Pfam" id="PF02527">
    <property type="entry name" value="GidB"/>
    <property type="match status" value="1"/>
</dbReference>
<dbReference type="PIRSF" id="PIRSF003078">
    <property type="entry name" value="GidB"/>
    <property type="match status" value="1"/>
</dbReference>
<dbReference type="SUPFAM" id="SSF53335">
    <property type="entry name" value="S-adenosyl-L-methionine-dependent methyltransferases"/>
    <property type="match status" value="1"/>
</dbReference>